<sequence length="334" mass="36409">MDLVRFGIIGTAAIAVEKVIPSMLSAEGLEVVAIASRDLDRARAAATRFGIGRSYGSYDEILADPEIEAVYIPLPNHLHVHWAIRAAEAGKHVLCEKPLALDVEELSRLIDCRDRTGRRIQEAVMIRAHPQWDEIFDIVASGEIGEVRAIQGVFTEVNLDPKSIVNDASIGGGALYDLGVYPIAAARMVFAAEPERVFAVSDLDPVFGIDRLTSAVLLFPGGRQATLVVSTQLALRHNVEIFGTRKSISLKNPFNPTPDDHCRIVLDNGSKLAAAAAETRRVAPADQYRLQAERFSAAIRSGSPLPIELEWSLGTMKVLNAIQRSAERGNWETV</sequence>
<organism>
    <name type="scientific">Rhizobium meliloti</name>
    <name type="common">Ensifer meliloti</name>
    <name type="synonym">Sinorhizobium meliloti</name>
    <dbReference type="NCBI Taxonomy" id="382"/>
    <lineage>
        <taxon>Bacteria</taxon>
        <taxon>Pseudomonadati</taxon>
        <taxon>Pseudomonadota</taxon>
        <taxon>Alphaproteobacteria</taxon>
        <taxon>Hyphomicrobiales</taxon>
        <taxon>Rhizobiaceae</taxon>
        <taxon>Sinorhizobium/Ensifer group</taxon>
        <taxon>Sinorhizobium</taxon>
    </lineage>
</organism>
<proteinExistence type="inferred from homology"/>
<comment type="similarity">
    <text evidence="1">Belongs to the Gfo/Idh/MocA family.</text>
</comment>
<evidence type="ECO:0000305" key="1"/>
<reference key="1">
    <citation type="journal article" date="1994" name="Mol. Gen. Genet.">
        <title>Molecular and genetic characterization of the rhizopine catabolism (mocABRC) genes of Rhizobium meliloti L5-30.</title>
        <authorList>
            <person name="Rossbach S."/>
            <person name="Kulpa D.A."/>
            <person name="Rossbach U."/>
            <person name="de Bruijn F.J."/>
        </authorList>
    </citation>
    <scope>NUCLEOTIDE SEQUENCE [GENOMIC DNA]</scope>
    <source>
        <strain>L5-30</strain>
    </source>
</reference>
<protein>
    <recommendedName>
        <fullName>Uncharacterized oxidoreductase ORF334</fullName>
        <ecNumber>1.-.-.-</ecNumber>
    </recommendedName>
</protein>
<dbReference type="EC" id="1.-.-.-"/>
<dbReference type="EMBL" id="X78503">
    <property type="protein sequence ID" value="CAA55267.1"/>
    <property type="molecule type" value="Genomic_DNA"/>
</dbReference>
<dbReference type="PIR" id="S51570">
    <property type="entry name" value="S51570"/>
</dbReference>
<dbReference type="RefSeq" id="WP_046066542.1">
    <property type="nucleotide sequence ID" value="NZ_CP021805.1"/>
</dbReference>
<dbReference type="SMR" id="P49305"/>
<dbReference type="PATRIC" id="fig|382.53.peg.1560"/>
<dbReference type="GO" id="GO:0000166">
    <property type="term" value="F:nucleotide binding"/>
    <property type="evidence" value="ECO:0007669"/>
    <property type="project" value="InterPro"/>
</dbReference>
<dbReference type="GO" id="GO:0016491">
    <property type="term" value="F:oxidoreductase activity"/>
    <property type="evidence" value="ECO:0007669"/>
    <property type="project" value="UniProtKB-KW"/>
</dbReference>
<dbReference type="Gene3D" id="3.30.360.10">
    <property type="entry name" value="Dihydrodipicolinate Reductase, domain 2"/>
    <property type="match status" value="1"/>
</dbReference>
<dbReference type="Gene3D" id="3.40.50.720">
    <property type="entry name" value="NAD(P)-binding Rossmann-like Domain"/>
    <property type="match status" value="1"/>
</dbReference>
<dbReference type="InterPro" id="IPR000683">
    <property type="entry name" value="Gfo/Idh/MocA-like_OxRdtase_N"/>
</dbReference>
<dbReference type="InterPro" id="IPR050984">
    <property type="entry name" value="Gfo/Idh/MocA_domain"/>
</dbReference>
<dbReference type="InterPro" id="IPR055170">
    <property type="entry name" value="GFO_IDH_MocA-like_dom"/>
</dbReference>
<dbReference type="InterPro" id="IPR036291">
    <property type="entry name" value="NAD(P)-bd_dom_sf"/>
</dbReference>
<dbReference type="PANTHER" id="PTHR22604">
    <property type="entry name" value="OXIDOREDUCTASES"/>
    <property type="match status" value="1"/>
</dbReference>
<dbReference type="PANTHER" id="PTHR22604:SF105">
    <property type="entry name" value="TRANS-1,2-DIHYDROBENZENE-1,2-DIOL DEHYDROGENASE"/>
    <property type="match status" value="1"/>
</dbReference>
<dbReference type="Pfam" id="PF01408">
    <property type="entry name" value="GFO_IDH_MocA"/>
    <property type="match status" value="1"/>
</dbReference>
<dbReference type="Pfam" id="PF22725">
    <property type="entry name" value="GFO_IDH_MocA_C3"/>
    <property type="match status" value="1"/>
</dbReference>
<dbReference type="SUPFAM" id="SSF55347">
    <property type="entry name" value="Glyceraldehyde-3-phosphate dehydrogenase-like, C-terminal domain"/>
    <property type="match status" value="1"/>
</dbReference>
<dbReference type="SUPFAM" id="SSF51735">
    <property type="entry name" value="NAD(P)-binding Rossmann-fold domains"/>
    <property type="match status" value="1"/>
</dbReference>
<feature type="chain" id="PRO_0000091787" description="Uncharacterized oxidoreductase ORF334">
    <location>
        <begin position="1"/>
        <end position="334"/>
    </location>
</feature>
<accession>P49305</accession>
<name>YMO1_RHIML</name>
<keyword id="KW-0560">Oxidoreductase</keyword>